<protein>
    <recommendedName>
        <fullName evidence="1">1-(5-phosphoribosyl)-5-[(5-phosphoribosylamino)methylideneamino] imidazole-4-carboxamide isomerase</fullName>
        <ecNumber evidence="1">5.3.1.16</ecNumber>
    </recommendedName>
    <alternativeName>
        <fullName evidence="1">Phosphoribosylformimino-5-aminoimidazole carboxamide ribotide isomerase</fullName>
    </alternativeName>
</protein>
<feature type="chain" id="PRO_0000142063" description="1-(5-phosphoribosyl)-5-[(5-phosphoribosylamino)methylideneamino] imidazole-4-carboxamide isomerase">
    <location>
        <begin position="1"/>
        <end position="257"/>
    </location>
</feature>
<feature type="active site" description="Proton acceptor" evidence="1">
    <location>
        <position position="8"/>
    </location>
</feature>
<feature type="active site" description="Proton donor" evidence="1">
    <location>
        <position position="129"/>
    </location>
</feature>
<organism>
    <name type="scientific">Thermosynechococcus vestitus (strain NIES-2133 / IAM M-273 / BP-1)</name>
    <dbReference type="NCBI Taxonomy" id="197221"/>
    <lineage>
        <taxon>Bacteria</taxon>
        <taxon>Bacillati</taxon>
        <taxon>Cyanobacteriota</taxon>
        <taxon>Cyanophyceae</taxon>
        <taxon>Acaryochloridales</taxon>
        <taxon>Thermosynechococcaceae</taxon>
        <taxon>Thermosynechococcus</taxon>
    </lineage>
</organism>
<evidence type="ECO:0000255" key="1">
    <source>
        <dbReference type="HAMAP-Rule" id="MF_01014"/>
    </source>
</evidence>
<comment type="catalytic activity">
    <reaction evidence="1">
        <text>1-(5-phospho-beta-D-ribosyl)-5-[(5-phospho-beta-D-ribosylamino)methylideneamino]imidazole-4-carboxamide = 5-[(5-phospho-1-deoxy-D-ribulos-1-ylimino)methylamino]-1-(5-phospho-beta-D-ribosyl)imidazole-4-carboxamide</text>
        <dbReference type="Rhea" id="RHEA:15469"/>
        <dbReference type="ChEBI" id="CHEBI:58435"/>
        <dbReference type="ChEBI" id="CHEBI:58525"/>
        <dbReference type="EC" id="5.3.1.16"/>
    </reaction>
</comment>
<comment type="pathway">
    <text evidence="1">Amino-acid biosynthesis; L-histidine biosynthesis; L-histidine from 5-phospho-alpha-D-ribose 1-diphosphate: step 4/9.</text>
</comment>
<comment type="subcellular location">
    <subcellularLocation>
        <location evidence="1">Cytoplasm</location>
    </subcellularLocation>
</comment>
<comment type="similarity">
    <text evidence="1">Belongs to the HisA/HisF family.</text>
</comment>
<reference key="1">
    <citation type="journal article" date="2002" name="DNA Res.">
        <title>Complete genome structure of the thermophilic cyanobacterium Thermosynechococcus elongatus BP-1.</title>
        <authorList>
            <person name="Nakamura Y."/>
            <person name="Kaneko T."/>
            <person name="Sato S."/>
            <person name="Ikeuchi M."/>
            <person name="Katoh H."/>
            <person name="Sasamoto S."/>
            <person name="Watanabe A."/>
            <person name="Iriguchi M."/>
            <person name="Kawashima K."/>
            <person name="Kimura T."/>
            <person name="Kishida Y."/>
            <person name="Kiyokawa C."/>
            <person name="Kohara M."/>
            <person name="Matsumoto M."/>
            <person name="Matsuno A."/>
            <person name="Nakazaki N."/>
            <person name="Shimpo S."/>
            <person name="Sugimoto M."/>
            <person name="Takeuchi C."/>
            <person name="Yamada M."/>
            <person name="Tabata S."/>
        </authorList>
    </citation>
    <scope>NUCLEOTIDE SEQUENCE [LARGE SCALE GENOMIC DNA]</scope>
    <source>
        <strain>NIES-2133 / IAM M-273 / BP-1</strain>
    </source>
</reference>
<sequence>MDVIPAIDLLDGKCVRLVQGNYDKVNVFHDDPLKVALYWQRLGAPRLHLVDLDAAKTGEPRNYDLIGKIVASLEIPVQVGGGLRSRQAVADLFLQGVNRAILGTVALENPKLVASLAAEYPGRIWVGLDARDGYVATRGWLETSKILATDLAQNMAAMGVAGFVYTDIQRDGTLQGPNIPALRQLLAVTNRPVIASGGVSSLNDILSLFALTPHGLVGAIVGKALYTKAMDLREAVRAVGQGRWQDIPPDLGSTTWA</sequence>
<keyword id="KW-0028">Amino-acid biosynthesis</keyword>
<keyword id="KW-0963">Cytoplasm</keyword>
<keyword id="KW-0368">Histidine biosynthesis</keyword>
<keyword id="KW-0413">Isomerase</keyword>
<keyword id="KW-1185">Reference proteome</keyword>
<accession>Q8DMA5</accession>
<dbReference type="EC" id="5.3.1.16" evidence="1"/>
<dbReference type="EMBL" id="BA000039">
    <property type="protein sequence ID" value="BAC07769.1"/>
    <property type="molecule type" value="Genomic_DNA"/>
</dbReference>
<dbReference type="RefSeq" id="NP_681007.1">
    <property type="nucleotide sequence ID" value="NC_004113.1"/>
</dbReference>
<dbReference type="RefSeq" id="WP_011056071.1">
    <property type="nucleotide sequence ID" value="NC_004113.1"/>
</dbReference>
<dbReference type="SMR" id="Q8DMA5"/>
<dbReference type="STRING" id="197221.gene:10746797"/>
<dbReference type="EnsemblBacteria" id="BAC07769">
    <property type="protein sequence ID" value="BAC07769"/>
    <property type="gene ID" value="BAC07769"/>
</dbReference>
<dbReference type="KEGG" id="tel:tll0216"/>
<dbReference type="PATRIC" id="fig|197221.4.peg.222"/>
<dbReference type="eggNOG" id="COG0106">
    <property type="taxonomic scope" value="Bacteria"/>
</dbReference>
<dbReference type="UniPathway" id="UPA00031">
    <property type="reaction ID" value="UER00009"/>
</dbReference>
<dbReference type="Proteomes" id="UP000000440">
    <property type="component" value="Chromosome"/>
</dbReference>
<dbReference type="GO" id="GO:0005737">
    <property type="term" value="C:cytoplasm"/>
    <property type="evidence" value="ECO:0007669"/>
    <property type="project" value="UniProtKB-SubCell"/>
</dbReference>
<dbReference type="GO" id="GO:0003949">
    <property type="term" value="F:1-(5-phosphoribosyl)-5-[(5-phosphoribosylamino)methylideneamino]imidazole-4-carboxamide isomerase activity"/>
    <property type="evidence" value="ECO:0007669"/>
    <property type="project" value="UniProtKB-UniRule"/>
</dbReference>
<dbReference type="GO" id="GO:0000105">
    <property type="term" value="P:L-histidine biosynthetic process"/>
    <property type="evidence" value="ECO:0007669"/>
    <property type="project" value="UniProtKB-UniRule"/>
</dbReference>
<dbReference type="GO" id="GO:0000162">
    <property type="term" value="P:L-tryptophan biosynthetic process"/>
    <property type="evidence" value="ECO:0007669"/>
    <property type="project" value="TreeGrafter"/>
</dbReference>
<dbReference type="CDD" id="cd04732">
    <property type="entry name" value="HisA"/>
    <property type="match status" value="1"/>
</dbReference>
<dbReference type="FunFam" id="3.20.20.70:FF:000009">
    <property type="entry name" value="1-(5-phosphoribosyl)-5-[(5-phosphoribosylamino)methylideneamino] imidazole-4-carboxamide isomerase"/>
    <property type="match status" value="1"/>
</dbReference>
<dbReference type="Gene3D" id="3.20.20.70">
    <property type="entry name" value="Aldolase class I"/>
    <property type="match status" value="1"/>
</dbReference>
<dbReference type="HAMAP" id="MF_01014">
    <property type="entry name" value="HisA"/>
    <property type="match status" value="1"/>
</dbReference>
<dbReference type="InterPro" id="IPR013785">
    <property type="entry name" value="Aldolase_TIM"/>
</dbReference>
<dbReference type="InterPro" id="IPR006062">
    <property type="entry name" value="His_biosynth"/>
</dbReference>
<dbReference type="InterPro" id="IPR006063">
    <property type="entry name" value="HisA_bact_arch"/>
</dbReference>
<dbReference type="InterPro" id="IPR044524">
    <property type="entry name" value="Isoase_HisA-like"/>
</dbReference>
<dbReference type="InterPro" id="IPR023016">
    <property type="entry name" value="Isoase_HisA-like_bact"/>
</dbReference>
<dbReference type="InterPro" id="IPR011060">
    <property type="entry name" value="RibuloseP-bd_barrel"/>
</dbReference>
<dbReference type="NCBIfam" id="TIGR00007">
    <property type="entry name" value="1-(5-phosphoribosyl)-5-[(5-phosphoribosylamino)methylideneamino]imidazole-4-carboxamide isomerase"/>
    <property type="match status" value="1"/>
</dbReference>
<dbReference type="PANTHER" id="PTHR43090">
    <property type="entry name" value="1-(5-PHOSPHORIBOSYL)-5-[(5-PHOSPHORIBOSYLAMINO)METHYLIDENEAMINO] IMIDAZOLE-4-CARBOXAMIDE ISOMERASE"/>
    <property type="match status" value="1"/>
</dbReference>
<dbReference type="PANTHER" id="PTHR43090:SF2">
    <property type="entry name" value="1-(5-PHOSPHORIBOSYL)-5-[(5-PHOSPHORIBOSYLAMINO)METHYLIDENEAMINO] IMIDAZOLE-4-CARBOXAMIDE ISOMERASE"/>
    <property type="match status" value="1"/>
</dbReference>
<dbReference type="Pfam" id="PF00977">
    <property type="entry name" value="His_biosynth"/>
    <property type="match status" value="1"/>
</dbReference>
<dbReference type="SUPFAM" id="SSF51366">
    <property type="entry name" value="Ribulose-phoshate binding barrel"/>
    <property type="match status" value="1"/>
</dbReference>
<name>HIS4_THEVB</name>
<proteinExistence type="inferred from homology"/>
<gene>
    <name evidence="1" type="primary">hisA</name>
    <name type="ordered locus">tll0216</name>
</gene>